<protein>
    <recommendedName>
        <fullName>Exonuclease V, mitochondrial</fullName>
        <shortName>Exo V</shortName>
        <ecNumber>3.1.-.-</ecNumber>
    </recommendedName>
    <alternativeName>
        <fullName>Defects in morphology protein 1</fullName>
    </alternativeName>
</protein>
<organism>
    <name type="scientific">Saccharomyces cerevisiae (strain YJM789)</name>
    <name type="common">Baker's yeast</name>
    <dbReference type="NCBI Taxonomy" id="307796"/>
    <lineage>
        <taxon>Eukaryota</taxon>
        <taxon>Fungi</taxon>
        <taxon>Dikarya</taxon>
        <taxon>Ascomycota</taxon>
        <taxon>Saccharomycotina</taxon>
        <taxon>Saccharomycetes</taxon>
        <taxon>Saccharomycetales</taxon>
        <taxon>Saccharomycetaceae</taxon>
        <taxon>Saccharomyces</taxon>
    </lineage>
</organism>
<evidence type="ECO:0000250" key="1"/>
<evidence type="ECO:0000255" key="2"/>
<evidence type="ECO:0000305" key="3"/>
<accession>A6ZLA6</accession>
<reference key="1">
    <citation type="journal article" date="2007" name="Proc. Natl. Acad. Sci. U.S.A.">
        <title>Genome sequencing and comparative analysis of Saccharomyces cerevisiae strain YJM789.</title>
        <authorList>
            <person name="Wei W."/>
            <person name="McCusker J.H."/>
            <person name="Hyman R.W."/>
            <person name="Jones T."/>
            <person name="Ning Y."/>
            <person name="Cao Z."/>
            <person name="Gu Z."/>
            <person name="Bruno D."/>
            <person name="Miranda M."/>
            <person name="Nguyen M."/>
            <person name="Wilhelmy J."/>
            <person name="Komp C."/>
            <person name="Tamse R."/>
            <person name="Wang X."/>
            <person name="Jia P."/>
            <person name="Luedi P."/>
            <person name="Oefner P.J."/>
            <person name="David L."/>
            <person name="Dietrich F.S."/>
            <person name="Li Y."/>
            <person name="Davis R.W."/>
            <person name="Steinmetz L.M."/>
        </authorList>
    </citation>
    <scope>NUCLEOTIDE SEQUENCE [LARGE SCALE GENOMIC DNA]</scope>
    <source>
        <strain>YJM789</strain>
    </source>
</reference>
<name>EXO5_YEAS7</name>
<feature type="transit peptide" description="Mitochondrion" evidence="2">
    <location>
        <begin position="1"/>
        <end position="26"/>
    </location>
</feature>
<feature type="chain" id="PRO_0000406694" description="Exonuclease V, mitochondrial">
    <location>
        <begin position="27"/>
        <end position="585"/>
    </location>
</feature>
<feature type="binding site" evidence="1">
    <location>
        <position position="141"/>
    </location>
    <ligand>
        <name>[4Fe-4S] cluster</name>
        <dbReference type="ChEBI" id="CHEBI:49883"/>
    </ligand>
</feature>
<feature type="binding site" evidence="1">
    <location>
        <position position="549"/>
    </location>
    <ligand>
        <name>[4Fe-4S] cluster</name>
        <dbReference type="ChEBI" id="CHEBI:49883"/>
    </ligand>
</feature>
<feature type="binding site" evidence="1">
    <location>
        <position position="552"/>
    </location>
    <ligand>
        <name>[4Fe-4S] cluster</name>
        <dbReference type="ChEBI" id="CHEBI:49883"/>
    </ligand>
</feature>
<feature type="binding site" evidence="1">
    <location>
        <position position="558"/>
    </location>
    <ligand>
        <name>[4Fe-4S] cluster</name>
        <dbReference type="ChEBI" id="CHEBI:49883"/>
    </ligand>
</feature>
<comment type="function">
    <text evidence="1">Single strand DNA specific 5' exonuclease involved in mitochondrial DNA replication and recombination. Releases dinucleotides as main products of catalysis. Has the capacity to slide across 5'double-stranded DNA or 5'RNA sequences and resumes cutting two nucleotides downstream of the double-stranded-to-single-stranded junction or RNA-to-DNA junction, respectively (By similarity).</text>
</comment>
<comment type="cofactor">
    <cofactor evidence="1">
        <name>Mg(2+)</name>
        <dbReference type="ChEBI" id="CHEBI:18420"/>
    </cofactor>
</comment>
<comment type="cofactor">
    <cofactor evidence="1">
        <name>[4Fe-4S] cluster</name>
        <dbReference type="ChEBI" id="CHEBI:49883"/>
    </cofactor>
    <text evidence="1">Binds 1 [4Fe-4S] cluster.</text>
</comment>
<comment type="subunit">
    <text evidence="1">Monomer.</text>
</comment>
<comment type="subcellular location">
    <subcellularLocation>
        <location evidence="1">Mitochondrion</location>
    </subcellularLocation>
</comment>
<comment type="similarity">
    <text evidence="3">Belongs to the EXO5 family.</text>
</comment>
<sequence length="585" mass="67520">MLGRTLINKHGFLIHPRRFVHLNDKSLDGTFILPSKKNHMYDVPTNDPSGILNASDIDRINNLPFFDNTSPTKETNTKEGALLSEKLASVKELFGEDPENPSFINYRFPRGLENPYFDIQVNQLKKKRLSVTQLCTTQNWCELRNFYDFYSQNLSNQLLNLKFQVQKGKKIHKSLEDETHPELNQYKSFTHNFLALTKLSMDIDNDMDALLDNWFNSINRLVSLFTKGDGHAREIVCHGFINLEDGKLVEHLLNSDSKTKENVIISGVIDHLTLRNKHNHQVQKGAAHLDTEYQSWGNILTNLLSNLKELKSNNEIVISDIKTRSVPKIPSIESVIESSKLQTMYYKFFFSHLSQDMTQTYHSFLINAKRRGLDVDAPINPTKILTFILTNPLFANDVKNLLYGLPINHSAFDNDAKGSNTFDMAAFNDLLDRGPTSFNVPIEQDEDSSESTKCVSLRDYGHFYTKWKTPLTLKYFAARLSQIYFIVGNLVSNDLMIEYYYHNDNFHNIIFPYDTLKLGTHAHDSAMVWFGGRDMHPIEPTQKNFNTYCKFCDYRHVCSWKNKNELKLIDLGKELKKIILESSMK</sequence>
<keyword id="KW-0004">4Fe-4S</keyword>
<keyword id="KW-0238">DNA-binding</keyword>
<keyword id="KW-0269">Exonuclease</keyword>
<keyword id="KW-0378">Hydrolase</keyword>
<keyword id="KW-0408">Iron</keyword>
<keyword id="KW-0411">Iron-sulfur</keyword>
<keyword id="KW-0460">Magnesium</keyword>
<keyword id="KW-0479">Metal-binding</keyword>
<keyword id="KW-0496">Mitochondrion</keyword>
<keyword id="KW-0540">Nuclease</keyword>
<keyword id="KW-0809">Transit peptide</keyword>
<dbReference type="EC" id="3.1.-.-"/>
<dbReference type="EMBL" id="AAFW02000011">
    <property type="protein sequence ID" value="EDN64775.1"/>
    <property type="molecule type" value="Genomic_DNA"/>
</dbReference>
<dbReference type="HOGENOM" id="CLU_019985_0_0_1"/>
<dbReference type="Proteomes" id="UP000007060">
    <property type="component" value="Unassembled WGS sequence"/>
</dbReference>
<dbReference type="GO" id="GO:0005739">
    <property type="term" value="C:mitochondrion"/>
    <property type="evidence" value="ECO:0007669"/>
    <property type="project" value="UniProtKB-SubCell"/>
</dbReference>
<dbReference type="GO" id="GO:0005634">
    <property type="term" value="C:nucleus"/>
    <property type="evidence" value="ECO:0007669"/>
    <property type="project" value="TreeGrafter"/>
</dbReference>
<dbReference type="GO" id="GO:0051539">
    <property type="term" value="F:4 iron, 4 sulfur cluster binding"/>
    <property type="evidence" value="ECO:0007669"/>
    <property type="project" value="UniProtKB-KW"/>
</dbReference>
<dbReference type="GO" id="GO:0003677">
    <property type="term" value="F:DNA binding"/>
    <property type="evidence" value="ECO:0007669"/>
    <property type="project" value="UniProtKB-KW"/>
</dbReference>
<dbReference type="GO" id="GO:0046872">
    <property type="term" value="F:metal ion binding"/>
    <property type="evidence" value="ECO:0007669"/>
    <property type="project" value="UniProtKB-KW"/>
</dbReference>
<dbReference type="GO" id="GO:0045145">
    <property type="term" value="F:single-stranded DNA 5'-3' DNA exonuclease activity"/>
    <property type="evidence" value="ECO:0007669"/>
    <property type="project" value="InterPro"/>
</dbReference>
<dbReference type="GO" id="GO:0036297">
    <property type="term" value="P:interstrand cross-link repair"/>
    <property type="evidence" value="ECO:0007669"/>
    <property type="project" value="TreeGrafter"/>
</dbReference>
<dbReference type="GO" id="GO:0000002">
    <property type="term" value="P:mitochondrial genome maintenance"/>
    <property type="evidence" value="ECO:0007669"/>
    <property type="project" value="InterPro"/>
</dbReference>
<dbReference type="InterPro" id="IPR016610">
    <property type="entry name" value="Exo5"/>
</dbReference>
<dbReference type="InterPro" id="IPR019190">
    <property type="entry name" value="EXOV"/>
</dbReference>
<dbReference type="PANTHER" id="PTHR14464">
    <property type="entry name" value="EXONUCLEASE V"/>
    <property type="match status" value="1"/>
</dbReference>
<dbReference type="PANTHER" id="PTHR14464:SF4">
    <property type="entry name" value="EXONUCLEASE V"/>
    <property type="match status" value="1"/>
</dbReference>
<dbReference type="Pfam" id="PF09810">
    <property type="entry name" value="Exo5"/>
    <property type="match status" value="1"/>
</dbReference>
<dbReference type="PIRSF" id="PIRSF013220">
    <property type="entry name" value="UCP013220"/>
    <property type="match status" value="1"/>
</dbReference>
<proteinExistence type="inferred from homology"/>
<gene>
    <name type="primary">EXO5</name>
    <name type="synonym">DEM1</name>
    <name type="ORF">SCY_0376</name>
</gene>